<gene>
    <name evidence="1" type="primary">ndhB2</name>
</gene>
<dbReference type="EC" id="7.1.1.-" evidence="1"/>
<dbReference type="EMBL" id="AJ879453">
    <property type="protein sequence ID" value="CAI53839.1"/>
    <property type="molecule type" value="Genomic_DNA"/>
</dbReference>
<dbReference type="SMR" id="P0CC22"/>
<dbReference type="GO" id="GO:0009535">
    <property type="term" value="C:chloroplast thylakoid membrane"/>
    <property type="evidence" value="ECO:0007669"/>
    <property type="project" value="UniProtKB-SubCell"/>
</dbReference>
<dbReference type="GO" id="GO:0008137">
    <property type="term" value="F:NADH dehydrogenase (ubiquinone) activity"/>
    <property type="evidence" value="ECO:0007669"/>
    <property type="project" value="InterPro"/>
</dbReference>
<dbReference type="GO" id="GO:0048038">
    <property type="term" value="F:quinone binding"/>
    <property type="evidence" value="ECO:0007669"/>
    <property type="project" value="UniProtKB-KW"/>
</dbReference>
<dbReference type="GO" id="GO:0042773">
    <property type="term" value="P:ATP synthesis coupled electron transport"/>
    <property type="evidence" value="ECO:0007669"/>
    <property type="project" value="InterPro"/>
</dbReference>
<dbReference type="GO" id="GO:0019684">
    <property type="term" value="P:photosynthesis, light reaction"/>
    <property type="evidence" value="ECO:0007669"/>
    <property type="project" value="UniProtKB-UniRule"/>
</dbReference>
<dbReference type="HAMAP" id="MF_00445">
    <property type="entry name" value="NDH1_NuoN_1"/>
    <property type="match status" value="1"/>
</dbReference>
<dbReference type="InterPro" id="IPR010096">
    <property type="entry name" value="NADH-Q_OxRdtase_suN/2"/>
</dbReference>
<dbReference type="InterPro" id="IPR001750">
    <property type="entry name" value="ND/Mrp_TM"/>
</dbReference>
<dbReference type="InterPro" id="IPR045693">
    <property type="entry name" value="Ndh2_N"/>
</dbReference>
<dbReference type="NCBIfam" id="TIGR01770">
    <property type="entry name" value="NDH_I_N"/>
    <property type="match status" value="1"/>
</dbReference>
<dbReference type="NCBIfam" id="NF002701">
    <property type="entry name" value="PRK02504.1"/>
    <property type="match status" value="1"/>
</dbReference>
<dbReference type="PANTHER" id="PTHR22773">
    <property type="entry name" value="NADH DEHYDROGENASE"/>
    <property type="match status" value="1"/>
</dbReference>
<dbReference type="Pfam" id="PF19530">
    <property type="entry name" value="Ndh2_N"/>
    <property type="match status" value="1"/>
</dbReference>
<dbReference type="Pfam" id="PF00361">
    <property type="entry name" value="Proton_antipo_M"/>
    <property type="match status" value="1"/>
</dbReference>
<dbReference type="PRINTS" id="PR01434">
    <property type="entry name" value="NADHDHGNASE5"/>
</dbReference>
<geneLocation type="chloroplast"/>
<keyword id="KW-0150">Chloroplast</keyword>
<keyword id="KW-0472">Membrane</keyword>
<keyword id="KW-0520">NAD</keyword>
<keyword id="KW-0521">NADP</keyword>
<keyword id="KW-0934">Plastid</keyword>
<keyword id="KW-0618">Plastoquinone</keyword>
<keyword id="KW-0874">Quinone</keyword>
<keyword id="KW-0793">Thylakoid</keyword>
<keyword id="KW-1278">Translocase</keyword>
<keyword id="KW-0812">Transmembrane</keyword>
<keyword id="KW-1133">Transmembrane helix</keyword>
<keyword id="KW-0813">Transport</keyword>
<evidence type="ECO:0000255" key="1">
    <source>
        <dbReference type="HAMAP-Rule" id="MF_00445"/>
    </source>
</evidence>
<feature type="chain" id="PRO_0000391249" description="NAD(P)H-quinone oxidoreductase subunit 2 B, chloroplastic">
    <location>
        <begin position="1"/>
        <end position="510"/>
    </location>
</feature>
<feature type="transmembrane region" description="Helical" evidence="1">
    <location>
        <begin position="24"/>
        <end position="44"/>
    </location>
</feature>
<feature type="transmembrane region" description="Helical" evidence="1">
    <location>
        <begin position="59"/>
        <end position="79"/>
    </location>
</feature>
<feature type="transmembrane region" description="Helical" evidence="1">
    <location>
        <begin position="99"/>
        <end position="119"/>
    </location>
</feature>
<feature type="transmembrane region" description="Helical" evidence="1">
    <location>
        <begin position="124"/>
        <end position="144"/>
    </location>
</feature>
<feature type="transmembrane region" description="Helical" evidence="1">
    <location>
        <begin position="150"/>
        <end position="170"/>
    </location>
</feature>
<feature type="transmembrane region" description="Helical" evidence="1">
    <location>
        <begin position="184"/>
        <end position="204"/>
    </location>
</feature>
<feature type="transmembrane region" description="Helical" evidence="1">
    <location>
        <begin position="229"/>
        <end position="249"/>
    </location>
</feature>
<feature type="transmembrane region" description="Helical" evidence="1">
    <location>
        <begin position="295"/>
        <end position="315"/>
    </location>
</feature>
<feature type="transmembrane region" description="Helical" evidence="1">
    <location>
        <begin position="323"/>
        <end position="343"/>
    </location>
</feature>
<feature type="transmembrane region" description="Helical" evidence="1">
    <location>
        <begin position="354"/>
        <end position="374"/>
    </location>
</feature>
<feature type="transmembrane region" description="Helical" evidence="1">
    <location>
        <begin position="395"/>
        <end position="415"/>
    </location>
</feature>
<feature type="transmembrane region" description="Helical" evidence="1">
    <location>
        <begin position="418"/>
        <end position="438"/>
    </location>
</feature>
<feature type="transmembrane region" description="Helical" evidence="1">
    <location>
        <begin position="484"/>
        <end position="504"/>
    </location>
</feature>
<protein>
    <recommendedName>
        <fullName evidence="1">NAD(P)H-quinone oxidoreductase subunit 2 B, chloroplastic</fullName>
        <ecNumber evidence="1">7.1.1.-</ecNumber>
    </recommendedName>
    <alternativeName>
        <fullName evidence="1">NAD(P)H dehydrogenase, subunit 2 B</fullName>
    </alternativeName>
    <alternativeName>
        <fullName evidence="1">NADH-plastoquinone oxidoreductase subunit 2 B</fullName>
    </alternativeName>
</protein>
<comment type="function">
    <text evidence="1">NDH shuttles electrons from NAD(P)H:plastoquinone, via FMN and iron-sulfur (Fe-S) centers, to quinones in the photosynthetic chain and possibly in a chloroplast respiratory chain. The immediate electron acceptor for the enzyme in this species is believed to be plastoquinone. Couples the redox reaction to proton translocation, and thus conserves the redox energy in a proton gradient.</text>
</comment>
<comment type="catalytic activity">
    <reaction evidence="1">
        <text>a plastoquinone + NADH + (n+1) H(+)(in) = a plastoquinol + NAD(+) + n H(+)(out)</text>
        <dbReference type="Rhea" id="RHEA:42608"/>
        <dbReference type="Rhea" id="RHEA-COMP:9561"/>
        <dbReference type="Rhea" id="RHEA-COMP:9562"/>
        <dbReference type="ChEBI" id="CHEBI:15378"/>
        <dbReference type="ChEBI" id="CHEBI:17757"/>
        <dbReference type="ChEBI" id="CHEBI:57540"/>
        <dbReference type="ChEBI" id="CHEBI:57945"/>
        <dbReference type="ChEBI" id="CHEBI:62192"/>
    </reaction>
</comment>
<comment type="catalytic activity">
    <reaction evidence="1">
        <text>a plastoquinone + NADPH + (n+1) H(+)(in) = a plastoquinol + NADP(+) + n H(+)(out)</text>
        <dbReference type="Rhea" id="RHEA:42612"/>
        <dbReference type="Rhea" id="RHEA-COMP:9561"/>
        <dbReference type="Rhea" id="RHEA-COMP:9562"/>
        <dbReference type="ChEBI" id="CHEBI:15378"/>
        <dbReference type="ChEBI" id="CHEBI:17757"/>
        <dbReference type="ChEBI" id="CHEBI:57783"/>
        <dbReference type="ChEBI" id="CHEBI:58349"/>
        <dbReference type="ChEBI" id="CHEBI:62192"/>
    </reaction>
</comment>
<comment type="subunit">
    <text evidence="1">NDH is composed of at least 16 different subunits, 5 of which are encoded in the nucleus.</text>
</comment>
<comment type="subcellular location">
    <subcellularLocation>
        <location evidence="1">Plastid</location>
        <location evidence="1">Chloroplast thylakoid membrane</location>
        <topology evidence="1">Multi-pass membrane protein</topology>
    </subcellularLocation>
</comment>
<comment type="similarity">
    <text evidence="1">Belongs to the complex I subunit 2 family.</text>
</comment>
<sequence>MIWHVQNENFILDSTRIFMKAFHLLLFDGSFIFPECILIFGLILLLMIDSTSDQKDRPWFYFISSTSLVMSIAALLFRWREEPMISFSGNFQTNNFNEIFQFLILLCSTLCIPLSVEYIECTEMAITEFLLFVLTATLGGMFLCGANDSITIFVAPECFSLCSYLLSGYTKRDVRSNEATMKYLLMGGASSSILVHGFSWLYGLSGGEIELQEIVNGLINTQMYNSPGISIALIFITVGIGFKLSLAPFHQWTPDVYEGSPTPVVAFLSVTSKVAASASATRIFDIPFYFSSNEWHLLLEILAILSMILGNLIAITQTSMKRMLAYSSIGQIGYVIIGIIVGDSNDGYASMITYMLFYISMNLGTFARIVLFGLRTGTDNIRDYAGLYTKDPFLALSLALCLLSLGGLPPLAGFFGKLHLFWCGWQAGLYFLVSIGLLTSVVSIYYYLKIIKLLMTGRNQEITPHVRNYRRSPLRSNNSIELSMIVCVIASTIPGISMNPILAIAQDTLF</sequence>
<reference key="1">
    <citation type="journal article" date="2005" name="Mol. Biol. Evol.">
        <title>Analysis of Acorus calamus chloroplast genome and its phylogenetic implications.</title>
        <authorList>
            <person name="Goremykin V.V."/>
            <person name="Holland B."/>
            <person name="Hirsch-Ernst K.I."/>
            <person name="Hellwig F.H."/>
        </authorList>
    </citation>
    <scope>NUCLEOTIDE SEQUENCE [LARGE SCALE GENOMIC DNA]</scope>
</reference>
<accession>P0CC22</accession>
<accession>Q3V4X4</accession>
<organism>
    <name type="scientific">Acorus calamus</name>
    <name type="common">Sweet flag</name>
    <dbReference type="NCBI Taxonomy" id="4465"/>
    <lineage>
        <taxon>Eukaryota</taxon>
        <taxon>Viridiplantae</taxon>
        <taxon>Streptophyta</taxon>
        <taxon>Embryophyta</taxon>
        <taxon>Tracheophyta</taxon>
        <taxon>Spermatophyta</taxon>
        <taxon>Magnoliopsida</taxon>
        <taxon>Liliopsida</taxon>
        <taxon>Acoraceae</taxon>
        <taxon>Acorus</taxon>
    </lineage>
</organism>
<name>NU2C2_ACOCL</name>
<proteinExistence type="inferred from homology"/>